<evidence type="ECO:0000250" key="1"/>
<evidence type="ECO:0000269" key="2">
    <source>
    </source>
</evidence>
<evidence type="ECO:0000269" key="3">
    <source>
    </source>
</evidence>
<evidence type="ECO:0000269" key="4">
    <source ref="4"/>
</evidence>
<evidence type="ECO:0000303" key="5">
    <source>
    </source>
</evidence>
<evidence type="ECO:0000305" key="6"/>
<evidence type="ECO:0007829" key="7">
    <source>
        <dbReference type="PDB" id="2Z61"/>
    </source>
</evidence>
<name>MFNC_METJA</name>
<gene>
    <name evidence="5" type="primary">mfnC</name>
    <name type="ordered locus">MJ0684</name>
</gene>
<organism>
    <name type="scientific">Methanocaldococcus jannaschii (strain ATCC 43067 / DSM 2661 / JAL-1 / JCM 10045 / NBRC 100440)</name>
    <name type="common">Methanococcus jannaschii</name>
    <dbReference type="NCBI Taxonomy" id="243232"/>
    <lineage>
        <taxon>Archaea</taxon>
        <taxon>Methanobacteriati</taxon>
        <taxon>Methanobacteriota</taxon>
        <taxon>Methanomada group</taxon>
        <taxon>Methanococci</taxon>
        <taxon>Methanococcales</taxon>
        <taxon>Methanocaldococcaceae</taxon>
        <taxon>Methanocaldococcus</taxon>
    </lineage>
</organism>
<proteinExistence type="evidence at protein level"/>
<keyword id="KW-0002">3D-structure</keyword>
<keyword id="KW-0032">Aminotransferase</keyword>
<keyword id="KW-0963">Cytoplasm</keyword>
<keyword id="KW-0663">Pyridoxal phosphate</keyword>
<keyword id="KW-1185">Reference proteome</keyword>
<keyword id="KW-0808">Transferase</keyword>
<comment type="function">
    <text evidence="3">Catalyzes the transamination reaction between 4-(hydroxymethyl)-2-furancarboxaldehyde phosphate (4-HFC-P) and alanine to produce pyruvate and 5-(aminomethyl)-3-furanmethanol phosphate (F1-P), the precursor for the furan moiety in methanofuran.</text>
</comment>
<comment type="catalytic activity">
    <reaction evidence="3">
        <text>4-(hydroxymethyl)-2-furancarboxaldehyde phosphate + L-alanine = [5-(aminomethyl)-3-furyl]methyl phosphate + pyruvate</text>
        <dbReference type="Rhea" id="RHEA:43564"/>
        <dbReference type="ChEBI" id="CHEBI:15361"/>
        <dbReference type="ChEBI" id="CHEBI:57972"/>
        <dbReference type="ChEBI" id="CHEBI:83407"/>
        <dbReference type="ChEBI" id="CHEBI:83431"/>
        <dbReference type="EC" id="2.6.1.108"/>
    </reaction>
</comment>
<comment type="cofactor">
    <cofactor evidence="4">
        <name>pyridoxal 5'-phosphate</name>
        <dbReference type="ChEBI" id="CHEBI:597326"/>
    </cofactor>
</comment>
<comment type="pathway">
    <text evidence="3">Cofactor biosynthesis; methanofuran biosynthesis.</text>
</comment>
<comment type="subunit">
    <text evidence="2 4">Homodimer.</text>
</comment>
<comment type="subcellular location">
    <subcellularLocation>
        <location evidence="1">Cytoplasm</location>
    </subcellularLocation>
</comment>
<comment type="similarity">
    <text evidence="6">Belongs to the class-I pyridoxal-phosphate-dependent aminotransferase family.</text>
</comment>
<feature type="chain" id="PRO_0000123859" description="(5-formylfuran-3-yl)methyl phosphate transaminase">
    <location>
        <begin position="1"/>
        <end position="370"/>
    </location>
</feature>
<feature type="modified residue" description="N6-(pyridoxal phosphate)lysine" evidence="4">
    <location>
        <position position="222"/>
    </location>
</feature>
<feature type="helix" evidence="7">
    <location>
        <begin position="4"/>
        <end position="8"/>
    </location>
</feature>
<feature type="helix" evidence="7">
    <location>
        <begin position="15"/>
        <end position="26"/>
    </location>
</feature>
<feature type="helix" evidence="7">
    <location>
        <begin position="45"/>
        <end position="56"/>
    </location>
</feature>
<feature type="helix" evidence="7">
    <location>
        <begin position="69"/>
        <end position="82"/>
    </location>
</feature>
<feature type="helix" evidence="7">
    <location>
        <begin position="89"/>
        <end position="91"/>
    </location>
</feature>
<feature type="strand" evidence="7">
    <location>
        <begin position="92"/>
        <end position="97"/>
    </location>
</feature>
<feature type="helix" evidence="7">
    <location>
        <begin position="98"/>
        <end position="109"/>
    </location>
</feature>
<feature type="strand" evidence="7">
    <location>
        <begin position="115"/>
        <end position="121"/>
    </location>
</feature>
<feature type="helix" evidence="7">
    <location>
        <begin position="125"/>
        <end position="132"/>
    </location>
</feature>
<feature type="strand" evidence="7">
    <location>
        <begin position="136"/>
        <end position="140"/>
    </location>
</feature>
<feature type="helix" evidence="7">
    <location>
        <begin position="144"/>
        <end position="150"/>
    </location>
</feature>
<feature type="strand" evidence="7">
    <location>
        <begin position="153"/>
        <end position="163"/>
    </location>
</feature>
<feature type="turn" evidence="7">
    <location>
        <begin position="165"/>
        <end position="167"/>
    </location>
</feature>
<feature type="helix" evidence="7">
    <location>
        <begin position="173"/>
        <end position="182"/>
    </location>
</feature>
<feature type="strand" evidence="7">
    <location>
        <begin position="184"/>
        <end position="189"/>
    </location>
</feature>
<feature type="turn" evidence="7">
    <location>
        <begin position="191"/>
        <end position="194"/>
    </location>
</feature>
<feature type="strand" evidence="7">
    <location>
        <begin position="196"/>
        <end position="199"/>
    </location>
</feature>
<feature type="helix" evidence="7">
    <location>
        <begin position="204"/>
        <end position="206"/>
    </location>
</feature>
<feature type="strand" evidence="7">
    <location>
        <begin position="212"/>
        <end position="219"/>
    </location>
</feature>
<feature type="helix" evidence="7">
    <location>
        <begin position="227"/>
        <end position="229"/>
    </location>
</feature>
<feature type="strand" evidence="7">
    <location>
        <begin position="232"/>
        <end position="235"/>
    </location>
</feature>
<feature type="helix" evidence="7">
    <location>
        <begin position="238"/>
        <end position="251"/>
    </location>
</feature>
<feature type="strand" evidence="7">
    <location>
        <begin position="253"/>
        <end position="255"/>
    </location>
</feature>
<feature type="helix" evidence="7">
    <location>
        <begin position="257"/>
        <end position="263"/>
    </location>
</feature>
<feature type="helix" evidence="7">
    <location>
        <begin position="264"/>
        <end position="267"/>
    </location>
</feature>
<feature type="helix" evidence="7">
    <location>
        <begin position="269"/>
        <end position="295"/>
    </location>
</feature>
<feature type="helix" evidence="7">
    <location>
        <begin position="317"/>
        <end position="328"/>
    </location>
</feature>
<feature type="helix" evidence="7">
    <location>
        <begin position="335"/>
        <end position="338"/>
    </location>
</feature>
<feature type="helix" evidence="7">
    <location>
        <begin position="340"/>
        <end position="342"/>
    </location>
</feature>
<feature type="strand" evidence="7">
    <location>
        <begin position="343"/>
        <end position="349"/>
    </location>
</feature>
<feature type="helix" evidence="7">
    <location>
        <begin position="354"/>
        <end position="368"/>
    </location>
</feature>
<dbReference type="EC" id="2.6.1.108" evidence="3"/>
<dbReference type="EMBL" id="L77117">
    <property type="protein sequence ID" value="AAB98679.1"/>
    <property type="molecule type" value="Genomic_DNA"/>
</dbReference>
<dbReference type="RefSeq" id="WP_010870189.1">
    <property type="nucleotide sequence ID" value="NC_000909.1"/>
</dbReference>
<dbReference type="PDB" id="2Z61">
    <property type="method" value="X-ray"/>
    <property type="resolution" value="2.20 A"/>
    <property type="chains" value="A=1-370"/>
</dbReference>
<dbReference type="PDBsum" id="2Z61"/>
<dbReference type="SMR" id="Q58097"/>
<dbReference type="FunCoup" id="Q58097">
    <property type="interactions" value="264"/>
</dbReference>
<dbReference type="STRING" id="243232.MJ_0684"/>
<dbReference type="PaxDb" id="243232-MJ_0684"/>
<dbReference type="EnsemblBacteria" id="AAB98679">
    <property type="protein sequence ID" value="AAB98679"/>
    <property type="gene ID" value="MJ_0684"/>
</dbReference>
<dbReference type="GeneID" id="1451550"/>
<dbReference type="KEGG" id="mja:MJ_0684"/>
<dbReference type="eggNOG" id="arCOG01130">
    <property type="taxonomic scope" value="Archaea"/>
</dbReference>
<dbReference type="HOGENOM" id="CLU_017584_4_3_2"/>
<dbReference type="InParanoid" id="Q58097"/>
<dbReference type="OrthoDB" id="372018at2157"/>
<dbReference type="PhylomeDB" id="Q58097"/>
<dbReference type="BioCyc" id="MetaCyc:MONOMER-18938"/>
<dbReference type="BRENDA" id="2.6.1.108">
    <property type="organism ID" value="3260"/>
</dbReference>
<dbReference type="UniPathway" id="UPA00080"/>
<dbReference type="EvolutionaryTrace" id="Q58097"/>
<dbReference type="Proteomes" id="UP000000805">
    <property type="component" value="Chromosome"/>
</dbReference>
<dbReference type="GO" id="GO:0005737">
    <property type="term" value="C:cytoplasm"/>
    <property type="evidence" value="ECO:0007669"/>
    <property type="project" value="UniProtKB-SubCell"/>
</dbReference>
<dbReference type="GO" id="GO:0030170">
    <property type="term" value="F:pyridoxal phosphate binding"/>
    <property type="evidence" value="ECO:0007669"/>
    <property type="project" value="InterPro"/>
</dbReference>
<dbReference type="GO" id="GO:0008483">
    <property type="term" value="F:transaminase activity"/>
    <property type="evidence" value="ECO:0000318"/>
    <property type="project" value="GO_Central"/>
</dbReference>
<dbReference type="GO" id="GO:0006520">
    <property type="term" value="P:amino acid metabolic process"/>
    <property type="evidence" value="ECO:0007669"/>
    <property type="project" value="InterPro"/>
</dbReference>
<dbReference type="GO" id="GO:0009058">
    <property type="term" value="P:biosynthetic process"/>
    <property type="evidence" value="ECO:0007669"/>
    <property type="project" value="InterPro"/>
</dbReference>
<dbReference type="CDD" id="cd00609">
    <property type="entry name" value="AAT_like"/>
    <property type="match status" value="1"/>
</dbReference>
<dbReference type="Gene3D" id="3.90.1150.10">
    <property type="entry name" value="Aspartate Aminotransferase, domain 1"/>
    <property type="match status" value="1"/>
</dbReference>
<dbReference type="Gene3D" id="3.40.640.10">
    <property type="entry name" value="Type I PLP-dependent aspartate aminotransferase-like (Major domain)"/>
    <property type="match status" value="1"/>
</dbReference>
<dbReference type="InterPro" id="IPR004839">
    <property type="entry name" value="Aminotransferase_I/II_large"/>
</dbReference>
<dbReference type="InterPro" id="IPR050596">
    <property type="entry name" value="AspAT/PAT-like"/>
</dbReference>
<dbReference type="InterPro" id="IPR004838">
    <property type="entry name" value="NHTrfase_class1_PyrdxlP-BS"/>
</dbReference>
<dbReference type="InterPro" id="IPR015424">
    <property type="entry name" value="PyrdxlP-dep_Trfase"/>
</dbReference>
<dbReference type="InterPro" id="IPR015421">
    <property type="entry name" value="PyrdxlP-dep_Trfase_major"/>
</dbReference>
<dbReference type="InterPro" id="IPR015422">
    <property type="entry name" value="PyrdxlP-dep_Trfase_small"/>
</dbReference>
<dbReference type="PANTHER" id="PTHR46383">
    <property type="entry name" value="ASPARTATE AMINOTRANSFERASE"/>
    <property type="match status" value="1"/>
</dbReference>
<dbReference type="PANTHER" id="PTHR46383:SF3">
    <property type="entry name" value="ASPARTATE AMINOTRANSFERASE-RELATED"/>
    <property type="match status" value="1"/>
</dbReference>
<dbReference type="Pfam" id="PF00155">
    <property type="entry name" value="Aminotran_1_2"/>
    <property type="match status" value="1"/>
</dbReference>
<dbReference type="SUPFAM" id="SSF53383">
    <property type="entry name" value="PLP-dependent transferases"/>
    <property type="match status" value="1"/>
</dbReference>
<dbReference type="PROSITE" id="PS00105">
    <property type="entry name" value="AA_TRANSFER_CLASS_1"/>
    <property type="match status" value="1"/>
</dbReference>
<reference key="1">
    <citation type="journal article" date="1996" name="Science">
        <title>Complete genome sequence of the methanogenic archaeon, Methanococcus jannaschii.</title>
        <authorList>
            <person name="Bult C.J."/>
            <person name="White O."/>
            <person name="Olsen G.J."/>
            <person name="Zhou L."/>
            <person name="Fleischmann R.D."/>
            <person name="Sutton G.G."/>
            <person name="Blake J.A."/>
            <person name="FitzGerald L.M."/>
            <person name="Clayton R.A."/>
            <person name="Gocayne J.D."/>
            <person name="Kerlavage A.R."/>
            <person name="Dougherty B.A."/>
            <person name="Tomb J.-F."/>
            <person name="Adams M.D."/>
            <person name="Reich C.I."/>
            <person name="Overbeek R."/>
            <person name="Kirkness E.F."/>
            <person name="Weinstock K.G."/>
            <person name="Merrick J.M."/>
            <person name="Glodek A."/>
            <person name="Scott J.L."/>
            <person name="Geoghagen N.S.M."/>
            <person name="Weidman J.F."/>
            <person name="Fuhrmann J.L."/>
            <person name="Nguyen D."/>
            <person name="Utterback T.R."/>
            <person name="Kelley J.M."/>
            <person name="Peterson J.D."/>
            <person name="Sadow P.W."/>
            <person name="Hanna M.C."/>
            <person name="Cotton M.D."/>
            <person name="Roberts K.M."/>
            <person name="Hurst M.A."/>
            <person name="Kaine B.P."/>
            <person name="Borodovsky M."/>
            <person name="Klenk H.-P."/>
            <person name="Fraser C.M."/>
            <person name="Smith H.O."/>
            <person name="Woese C.R."/>
            <person name="Venter J.C."/>
        </authorList>
    </citation>
    <scope>NUCLEOTIDE SEQUENCE [LARGE SCALE GENOMIC DNA]</scope>
    <source>
        <strain>ATCC 43067 / DSM 2661 / JAL-1 / JCM 10045 / NBRC 100440</strain>
    </source>
</reference>
<reference key="2">
    <citation type="journal article" date="2014" name="Biochemistry">
        <title>Biosynthesis of the 5-(aminomethyl)-3-furanmethanol moiety of methanofuran.</title>
        <authorList>
            <person name="Miller D."/>
            <person name="Wang Y."/>
            <person name="Xu H."/>
            <person name="Harich K."/>
            <person name="White R.H."/>
        </authorList>
    </citation>
    <scope>FUNCTION</scope>
    <scope>CATALYTIC ACTIVITY</scope>
    <scope>PATHWAY</scope>
</reference>
<reference key="3">
    <citation type="journal article" date="2003" name="Acta Crystallogr. D">
        <title>Crystallization and preliminary X-ray analysis of the Mj0684 gene product, a putative aspartate aminotransferase, from Methanococcus jannaschii.</title>
        <authorList>
            <person name="Yang J.K."/>
            <person name="Chang C."/>
            <person name="Cho S.J."/>
            <person name="Lee J.Y."/>
            <person name="Yu Y.G."/>
            <person name="Eom S.H."/>
            <person name="Suh S.W."/>
        </authorList>
    </citation>
    <scope>CRYSTALLIZATION</scope>
    <scope>SUBUNIT</scope>
</reference>
<reference key="4">
    <citation type="journal article" date="2008" name="Bull. Korean Chem. Soc.">
        <title>Crystal structure of MJ0684 from Methanococcus jannaschii, a novel archaeal homolog of kynurenine aminotransferase.</title>
        <authorList>
            <person name="Yang J.K."/>
        </authorList>
    </citation>
    <scope>X-RAY CRYSTALLOGRAPHY (2.20 ANGSTROMS) IN COMPLEX WITH PYRIDOXAL-PHOSPHATE</scope>
    <scope>COFACTOR</scope>
    <scope>SUBUNIT</scope>
</reference>
<protein>
    <recommendedName>
        <fullName evidence="6">(5-formylfuran-3-yl)methyl phosphate transaminase</fullName>
        <ecNumber evidence="3">2.6.1.108</ecNumber>
    </recommendedName>
    <alternativeName>
        <fullName evidence="5">4-HFC-P:alanine aminotransferase</fullName>
    </alternativeName>
</protein>
<sequence length="370" mass="42348">MLSKRLLNFESFEVMDILALAQKLESEGKKVIHLEIGEPDFNTPKPIVDEGIKSLKEGKTHYTDSRGILELREKISELYKDKYKADIIPDNIIITGGSSLGLFFALSSIIDDGDEVLIQNPCYPCYKNFIRFLGAKPVFCDFTVESLEEALSDKTKAIIINSPSNPLGEVIDREIYEFAYENIPYIISDEIYNGLVYEGKCYSAIEFDENLEKTILINGFSKLYAMTGWRIGYVISNDEIIEAILKLQQNLFISAPTISQYAALKAFEKETEREINSMIKEFDRRRRLVLKYVKDFGWEVNNPIGAYYVFPNIGEDGREFAYKLLKEKFVALTPGIGFGSKGKNYIRISYANSYENIKEGLERIKEFLNK</sequence>
<accession>Q58097</accession>